<dbReference type="EMBL" id="BA000040">
    <property type="protein sequence ID" value="BAC45990.1"/>
    <property type="molecule type" value="Genomic_DNA"/>
</dbReference>
<dbReference type="EMBL" id="M59243">
    <property type="protein sequence ID" value="AAA26243.1"/>
    <property type="molecule type" value="Genomic_DNA"/>
</dbReference>
<dbReference type="PIR" id="D38179">
    <property type="entry name" value="D38179"/>
</dbReference>
<dbReference type="RefSeq" id="NP_767365.1">
    <property type="nucleotide sequence ID" value="NC_004463.1"/>
</dbReference>
<dbReference type="RefSeq" id="WP_011083550.1">
    <property type="nucleotide sequence ID" value="NZ_CP011360.1"/>
</dbReference>
<dbReference type="SMR" id="P30335"/>
<dbReference type="FunCoup" id="P30335">
    <property type="interactions" value="191"/>
</dbReference>
<dbReference type="STRING" id="224911.AAV28_00470"/>
<dbReference type="EnsemblBacteria" id="BAC45990">
    <property type="protein sequence ID" value="BAC45990"/>
    <property type="gene ID" value="BAC45990"/>
</dbReference>
<dbReference type="GeneID" id="46488000"/>
<dbReference type="KEGG" id="bja:blr0725"/>
<dbReference type="PATRIC" id="fig|224911.44.peg.97"/>
<dbReference type="eggNOG" id="COG1762">
    <property type="taxonomic scope" value="Bacteria"/>
</dbReference>
<dbReference type="HOGENOM" id="CLU_072531_5_2_5"/>
<dbReference type="InParanoid" id="P30335"/>
<dbReference type="OrthoDB" id="95460at2"/>
<dbReference type="PhylomeDB" id="P30335"/>
<dbReference type="Proteomes" id="UP000002526">
    <property type="component" value="Chromosome"/>
</dbReference>
<dbReference type="GO" id="GO:0005737">
    <property type="term" value="C:cytoplasm"/>
    <property type="evidence" value="ECO:0007669"/>
    <property type="project" value="UniProtKB-SubCell"/>
</dbReference>
<dbReference type="GO" id="GO:0016301">
    <property type="term" value="F:kinase activity"/>
    <property type="evidence" value="ECO:0007669"/>
    <property type="project" value="UniProtKB-KW"/>
</dbReference>
<dbReference type="GO" id="GO:0030295">
    <property type="term" value="F:protein kinase activator activity"/>
    <property type="evidence" value="ECO:0000318"/>
    <property type="project" value="GO_Central"/>
</dbReference>
<dbReference type="GO" id="GO:0008982">
    <property type="term" value="F:protein-N(PI)-phosphohistidine-sugar phosphotransferase activity"/>
    <property type="evidence" value="ECO:0007669"/>
    <property type="project" value="InterPro"/>
</dbReference>
<dbReference type="GO" id="GO:0009401">
    <property type="term" value="P:phosphoenolpyruvate-dependent sugar phosphotransferase system"/>
    <property type="evidence" value="ECO:0007669"/>
    <property type="project" value="InterPro"/>
</dbReference>
<dbReference type="CDD" id="cd00211">
    <property type="entry name" value="PTS_IIA_fru"/>
    <property type="match status" value="1"/>
</dbReference>
<dbReference type="FunFam" id="3.40.930.10:FF:000009">
    <property type="entry name" value="PTS system, fructose specific IIABC component"/>
    <property type="match status" value="1"/>
</dbReference>
<dbReference type="Gene3D" id="3.40.930.10">
    <property type="entry name" value="Mannitol-specific EII, Chain A"/>
    <property type="match status" value="1"/>
</dbReference>
<dbReference type="InterPro" id="IPR016152">
    <property type="entry name" value="PTrfase/Anion_transptr"/>
</dbReference>
<dbReference type="InterPro" id="IPR002178">
    <property type="entry name" value="PTS_EIIA_type-2_dom"/>
</dbReference>
<dbReference type="InterPro" id="IPR006320">
    <property type="entry name" value="PTS_Nitro_regul"/>
</dbReference>
<dbReference type="InterPro" id="IPR051541">
    <property type="entry name" value="PTS_SugarTrans_NitroReg"/>
</dbReference>
<dbReference type="NCBIfam" id="TIGR01419">
    <property type="entry name" value="nitro_reg_IIA"/>
    <property type="match status" value="1"/>
</dbReference>
<dbReference type="PANTHER" id="PTHR47738:SF1">
    <property type="entry name" value="NITROGEN REGULATORY PROTEIN"/>
    <property type="match status" value="1"/>
</dbReference>
<dbReference type="PANTHER" id="PTHR47738">
    <property type="entry name" value="PTS SYSTEM FRUCTOSE-LIKE EIIA COMPONENT-RELATED"/>
    <property type="match status" value="1"/>
</dbReference>
<dbReference type="Pfam" id="PF00359">
    <property type="entry name" value="PTS_EIIA_2"/>
    <property type="match status" value="1"/>
</dbReference>
<dbReference type="SUPFAM" id="SSF55804">
    <property type="entry name" value="Phoshotransferase/anion transport protein"/>
    <property type="match status" value="1"/>
</dbReference>
<dbReference type="PROSITE" id="PS51094">
    <property type="entry name" value="PTS_EIIA_TYPE_2"/>
    <property type="match status" value="1"/>
</dbReference>
<dbReference type="PROSITE" id="PS00372">
    <property type="entry name" value="PTS_EIIA_TYPE_2_HIS"/>
    <property type="match status" value="1"/>
</dbReference>
<accession>P30335</accession>
<name>PTSN_BRADU</name>
<proteinExistence type="inferred from homology"/>
<protein>
    <recommendedName>
        <fullName>Nitrogen regulatory protein</fullName>
    </recommendedName>
    <alternativeName>
        <fullName>Enzyme IIA-NTR</fullName>
    </alternativeName>
    <alternativeName>
        <fullName>Nitrogen-metabolic PTS system EIIA component</fullName>
    </alternativeName>
</protein>
<evidence type="ECO:0000250" key="1"/>
<evidence type="ECO:0000255" key="2">
    <source>
        <dbReference type="PROSITE-ProRule" id="PRU00417"/>
    </source>
</evidence>
<reference key="1">
    <citation type="journal article" date="2002" name="DNA Res.">
        <title>Complete genomic sequence of nitrogen-fixing symbiotic bacterium Bradyrhizobium japonicum USDA110.</title>
        <authorList>
            <person name="Kaneko T."/>
            <person name="Nakamura Y."/>
            <person name="Sato S."/>
            <person name="Minamisawa K."/>
            <person name="Uchiumi T."/>
            <person name="Sasamoto S."/>
            <person name="Watanabe A."/>
            <person name="Idesawa K."/>
            <person name="Iriguchi M."/>
            <person name="Kawashima K."/>
            <person name="Kohara M."/>
            <person name="Matsumoto M."/>
            <person name="Shimpo S."/>
            <person name="Tsuruoka H."/>
            <person name="Wada T."/>
            <person name="Yamada M."/>
            <person name="Tabata S."/>
        </authorList>
    </citation>
    <scope>NUCLEOTIDE SEQUENCE [LARGE SCALE GENOMIC DNA]</scope>
    <source>
        <strain>JCM 10833 / BCRC 13528 / IAM 13628 / NBRC 14792 / USDA 110</strain>
    </source>
</reference>
<reference key="2">
    <citation type="journal article" date="1991" name="J. Bacteriol.">
        <title>Bradyrhizobium japonicum has two differentially regulated, functional homologs of the sigma 54 gene (rpoN).</title>
        <authorList>
            <person name="Kullik I."/>
            <person name="Fritsche S."/>
            <person name="Knobel H."/>
            <person name="Sanjuan J."/>
            <person name="Hennecke H."/>
            <person name="Fischer H.-M."/>
        </authorList>
    </citation>
    <scope>NUCLEOTIDE SEQUENCE [GENOMIC DNA] OF 1-90</scope>
    <source>
        <strain>USDA 110spc4</strain>
    </source>
</reference>
<keyword id="KW-0963">Cytoplasm</keyword>
<keyword id="KW-0418">Kinase</keyword>
<keyword id="KW-1185">Reference proteome</keyword>
<keyword id="KW-0808">Transferase</keyword>
<comment type="function">
    <text evidence="1">Seems to have a role in regulating nitrogen assimilation.</text>
</comment>
<comment type="subcellular location">
    <subcellularLocation>
        <location>Cytoplasm</location>
    </subcellularLocation>
</comment>
<comment type="domain">
    <text>The EIIA domain is phosphorylated by phospho-NPr on a histidyl residue.</text>
</comment>
<organism>
    <name type="scientific">Bradyrhizobium diazoefficiens (strain JCM 10833 / BCRC 13528 / IAM 13628 / NBRC 14792 / USDA 110)</name>
    <dbReference type="NCBI Taxonomy" id="224911"/>
    <lineage>
        <taxon>Bacteria</taxon>
        <taxon>Pseudomonadati</taxon>
        <taxon>Pseudomonadota</taxon>
        <taxon>Alphaproteobacteria</taxon>
        <taxon>Hyphomicrobiales</taxon>
        <taxon>Nitrobacteraceae</taxon>
        <taxon>Bradyrhizobium</taxon>
    </lineage>
</organism>
<feature type="chain" id="PRO_0000186693" description="Nitrogen regulatory protein">
    <location>
        <begin position="1"/>
        <end position="153"/>
    </location>
</feature>
<feature type="domain" description="PTS EIIA type-2" evidence="2">
    <location>
        <begin position="5"/>
        <end position="148"/>
    </location>
</feature>
<feature type="active site" description="Tele-phosphohistidine intermediate" evidence="2">
    <location>
        <position position="66"/>
    </location>
</feature>
<sequence length="153" mass="16455">MPITDLVAPEAILPALKVNSKKQALQELAAKAAELTGQNERAVFEVLLQREKLGTTAVGYGVAIPHGKLPKLEKIFGLFARLDRPIDFESMDGQPVDLVFLLLAPEGAGADHLKALARIARLLRDQDIAKKLRASRDAQAIYSVLALPPATAA</sequence>
<gene>
    <name type="primary">ptsN</name>
    <name type="ordered locus">blr0725</name>
</gene>